<accession>O68874</accession>
<accession>P48838</accession>
<accession>P75827</accession>
<accession>Q47159</accession>
<sequence>MFRKLAAECFGTFWLVFGGCGSAVLAAGFPELGIGFAGVALAFGLTVLTMAFAVGHISGGHFNPAVTIGLWAGGRFPAKEVVGYVIAQVVGGIVAAALLYLIASGKTGFDAAASGFASNGYGEHSPGGYSMLSALVVELVLSAGFLLVIHGATDKFAPAGFAPIAIGLALTLIHLISIPVTNTSVNPARSTAVAIFQGGWALEQLWFFWVVPIVGGIIGGLIYRTLLEKRD</sequence>
<proteinExistence type="inferred from homology"/>
<reference key="1">
    <citation type="submission" date="1998-03" db="EMBL/GenBank/DDBJ databases">
        <title>Cloning of the S. flexneri aquaporin-Z coding region.</title>
        <authorList>
            <person name="Calamita G."/>
            <person name="Ludovico A."/>
            <person name="DeVito D."/>
            <person name="Rizzo G."/>
            <person name="Svelto M."/>
        </authorList>
    </citation>
    <scope>NUCLEOTIDE SEQUENCE [GENOMIC DNA]</scope>
</reference>
<reference key="2">
    <citation type="journal article" date="2002" name="Nucleic Acids Res.">
        <title>Genome sequence of Shigella flexneri 2a: insights into pathogenicity through comparison with genomes of Escherichia coli K12 and O157.</title>
        <authorList>
            <person name="Jin Q."/>
            <person name="Yuan Z."/>
            <person name="Xu J."/>
            <person name="Wang Y."/>
            <person name="Shen Y."/>
            <person name="Lu W."/>
            <person name="Wang J."/>
            <person name="Liu H."/>
            <person name="Yang J."/>
            <person name="Yang F."/>
            <person name="Zhang X."/>
            <person name="Zhang J."/>
            <person name="Yang G."/>
            <person name="Wu H."/>
            <person name="Qu D."/>
            <person name="Dong J."/>
            <person name="Sun L."/>
            <person name="Xue Y."/>
            <person name="Zhao A."/>
            <person name="Gao Y."/>
            <person name="Zhu J."/>
            <person name="Kan B."/>
            <person name="Ding K."/>
            <person name="Chen S."/>
            <person name="Cheng H."/>
            <person name="Yao Z."/>
            <person name="He B."/>
            <person name="Chen R."/>
            <person name="Ma D."/>
            <person name="Qiang B."/>
            <person name="Wen Y."/>
            <person name="Hou Y."/>
            <person name="Yu J."/>
        </authorList>
    </citation>
    <scope>NUCLEOTIDE SEQUENCE [LARGE SCALE GENOMIC DNA]</scope>
    <source>
        <strain>301 / Serotype 2a</strain>
    </source>
</reference>
<reference key="3">
    <citation type="journal article" date="2003" name="Infect. Immun.">
        <title>Complete genome sequence and comparative genomics of Shigella flexneri serotype 2a strain 2457T.</title>
        <authorList>
            <person name="Wei J."/>
            <person name="Goldberg M.B."/>
            <person name="Burland V."/>
            <person name="Venkatesan M.M."/>
            <person name="Deng W."/>
            <person name="Fournier G."/>
            <person name="Mayhew G.F."/>
            <person name="Plunkett G. III"/>
            <person name="Rose D.J."/>
            <person name="Darling A."/>
            <person name="Mau B."/>
            <person name="Perna N.T."/>
            <person name="Payne S.M."/>
            <person name="Runyen-Janecky L.J."/>
            <person name="Zhou S."/>
            <person name="Schwartz D.C."/>
            <person name="Blattner F.R."/>
        </authorList>
    </citation>
    <scope>NUCLEOTIDE SEQUENCE [LARGE SCALE GENOMIC DNA]</scope>
    <source>
        <strain>ATCC 700930 / 2457T / Serotype 2a</strain>
    </source>
</reference>
<evidence type="ECO:0000255" key="1">
    <source>
        <dbReference type="HAMAP-Rule" id="MF_01146"/>
    </source>
</evidence>
<evidence type="ECO:0000305" key="2"/>
<protein>
    <recommendedName>
        <fullName evidence="1">Aquaporin Z</fullName>
    </recommendedName>
</protein>
<gene>
    <name evidence="1" type="primary">aqpZ</name>
    <name type="synonym">bniP</name>
    <name type="ordered locus">SF0832</name>
    <name type="ordered locus">S0873</name>
</gene>
<comment type="function">
    <text evidence="1">Channel that permits osmotically driven movement of water in both directions. It is involved in the osmoregulation and in the maintenance of cell turgor during volume expansion in rapidly growing cells. It mediates rapid entry or exit of water in response to abrupt changes in osmolarity.</text>
</comment>
<comment type="catalytic activity">
    <reaction evidence="1">
        <text>H2O(in) = H2O(out)</text>
        <dbReference type="Rhea" id="RHEA:29667"/>
        <dbReference type="ChEBI" id="CHEBI:15377"/>
    </reaction>
    <physiologicalReaction direction="left-to-right" evidence="1">
        <dbReference type="Rhea" id="RHEA:29668"/>
    </physiologicalReaction>
    <physiologicalReaction direction="right-to-left" evidence="1">
        <dbReference type="Rhea" id="RHEA:29669"/>
    </physiologicalReaction>
</comment>
<comment type="subunit">
    <text evidence="1">Homotetramer.</text>
</comment>
<comment type="subcellular location">
    <subcellularLocation>
        <location evidence="1">Cell inner membrane</location>
        <topology evidence="1">Multi-pass membrane protein</topology>
    </subcellularLocation>
</comment>
<comment type="domain">
    <text evidence="1">Aquaporins contain two tandem repeats each containing three membrane-spanning domains and a pore-forming loop with the signature motif Asn-Pro-Ala (NPA).</text>
</comment>
<comment type="similarity">
    <text evidence="1">Belongs to the MIP/aquaporin (TC 1.A.8) family.</text>
</comment>
<name>AQPZ_SHIFL</name>
<feature type="chain" id="PRO_0000064000" description="Aquaporin Z">
    <location>
        <begin position="1"/>
        <end position="231"/>
    </location>
</feature>
<feature type="transmembrane region" description="Helical" evidence="1">
    <location>
        <begin position="9"/>
        <end position="29"/>
    </location>
</feature>
<feature type="transmembrane region" description="Helical" evidence="1">
    <location>
        <begin position="34"/>
        <end position="54"/>
    </location>
</feature>
<feature type="transmembrane region" description="Helical" evidence="1">
    <location>
        <begin position="82"/>
        <end position="102"/>
    </location>
</feature>
<feature type="transmembrane region" description="Helical" evidence="1">
    <location>
        <begin position="129"/>
        <end position="149"/>
    </location>
</feature>
<feature type="transmembrane region" description="Helical" evidence="1">
    <location>
        <begin position="156"/>
        <end position="176"/>
    </location>
</feature>
<feature type="transmembrane region" description="Helical" evidence="1">
    <location>
        <begin position="202"/>
        <end position="222"/>
    </location>
</feature>
<feature type="short sequence motif" description="NPA 1" evidence="1">
    <location>
        <begin position="63"/>
        <end position="65"/>
    </location>
</feature>
<feature type="short sequence motif" description="NPA 2" evidence="1">
    <location>
        <begin position="186"/>
        <end position="188"/>
    </location>
</feature>
<feature type="site" description="Involved in tetramerization or stability of the tetramer" evidence="1">
    <location>
        <position position="20"/>
    </location>
</feature>
<feature type="site" description="Selectivity filter" evidence="1">
    <location>
        <position position="43"/>
    </location>
</feature>
<feature type="site" description="Selectivity filter" evidence="1">
    <location>
        <position position="174"/>
    </location>
</feature>
<feature type="site" description="Selectivity filter" evidence="1">
    <location>
        <position position="183"/>
    </location>
</feature>
<feature type="site" description="Selectivity filter" evidence="1">
    <location>
        <position position="189"/>
    </location>
</feature>
<feature type="sequence conflict" description="In Ref. 1; AAC12651." evidence="2" ref="1">
    <original>F</original>
    <variation>I</variation>
    <location>
        <position position="43"/>
    </location>
</feature>
<feature type="sequence conflict" description="In Ref. 1; AAC12651." evidence="2" ref="1">
    <original>L</original>
    <variation>V</variation>
    <location>
        <position position="99"/>
    </location>
</feature>
<feature type="sequence conflict" description="In Ref. 1; AAC12651." evidence="2" ref="1">
    <original>I</original>
    <variation>M</variation>
    <location>
        <position position="176"/>
    </location>
</feature>
<feature type="sequence conflict" description="In Ref. 1; AAC12651." evidence="2" ref="1">
    <original>L</original>
    <variation>V</variation>
    <location>
        <position position="227"/>
    </location>
</feature>
<dbReference type="EMBL" id="AF055905">
    <property type="protein sequence ID" value="AAC12651.1"/>
    <property type="molecule type" value="Genomic_DNA"/>
</dbReference>
<dbReference type="EMBL" id="AE005674">
    <property type="protein sequence ID" value="AAN42465.2"/>
    <property type="molecule type" value="Genomic_DNA"/>
</dbReference>
<dbReference type="EMBL" id="AE014073">
    <property type="protein sequence ID" value="AAP16338.1"/>
    <property type="molecule type" value="Genomic_DNA"/>
</dbReference>
<dbReference type="RefSeq" id="NP_706758.2">
    <property type="nucleotide sequence ID" value="NC_004337.2"/>
</dbReference>
<dbReference type="RefSeq" id="WP_001298299.1">
    <property type="nucleotide sequence ID" value="NZ_WPGW01000337.1"/>
</dbReference>
<dbReference type="SMR" id="O68874"/>
<dbReference type="STRING" id="198214.SF0832"/>
<dbReference type="DrugBank" id="DB03152">
    <property type="generic name" value="B-2-Octylglucoside"/>
</dbReference>
<dbReference type="PaxDb" id="198214-SF0832"/>
<dbReference type="GeneID" id="1023778"/>
<dbReference type="GeneID" id="75170949"/>
<dbReference type="KEGG" id="sfl:SF0832"/>
<dbReference type="KEGG" id="sfx:S0873"/>
<dbReference type="PATRIC" id="fig|198214.7.peg.961"/>
<dbReference type="HOGENOM" id="CLU_020019_3_2_6"/>
<dbReference type="Proteomes" id="UP000001006">
    <property type="component" value="Chromosome"/>
</dbReference>
<dbReference type="Proteomes" id="UP000002673">
    <property type="component" value="Chromosome"/>
</dbReference>
<dbReference type="GO" id="GO:0005886">
    <property type="term" value="C:plasma membrane"/>
    <property type="evidence" value="ECO:0007669"/>
    <property type="project" value="UniProtKB-SubCell"/>
</dbReference>
<dbReference type="GO" id="GO:0015250">
    <property type="term" value="F:water channel activity"/>
    <property type="evidence" value="ECO:0007669"/>
    <property type="project" value="UniProtKB-UniRule"/>
</dbReference>
<dbReference type="CDD" id="cd00333">
    <property type="entry name" value="MIP"/>
    <property type="match status" value="1"/>
</dbReference>
<dbReference type="FunFam" id="1.20.1080.10:FF:000007">
    <property type="entry name" value="Aquaporin Z"/>
    <property type="match status" value="1"/>
</dbReference>
<dbReference type="Gene3D" id="1.20.1080.10">
    <property type="entry name" value="Glycerol uptake facilitator protein"/>
    <property type="match status" value="1"/>
</dbReference>
<dbReference type="HAMAP" id="MF_01146">
    <property type="entry name" value="Aquaporin_Z"/>
    <property type="match status" value="1"/>
</dbReference>
<dbReference type="InterPro" id="IPR023271">
    <property type="entry name" value="Aquaporin-like"/>
</dbReference>
<dbReference type="InterPro" id="IPR034294">
    <property type="entry name" value="Aquaporin_transptr"/>
</dbReference>
<dbReference type="InterPro" id="IPR023743">
    <property type="entry name" value="Aquaporin_Z"/>
</dbReference>
<dbReference type="InterPro" id="IPR000425">
    <property type="entry name" value="MIP"/>
</dbReference>
<dbReference type="InterPro" id="IPR022357">
    <property type="entry name" value="MIP_CS"/>
</dbReference>
<dbReference type="NCBIfam" id="TIGR00861">
    <property type="entry name" value="MIP"/>
    <property type="match status" value="1"/>
</dbReference>
<dbReference type="NCBIfam" id="NF003838">
    <property type="entry name" value="PRK05420.1"/>
    <property type="match status" value="1"/>
</dbReference>
<dbReference type="PANTHER" id="PTHR19139">
    <property type="entry name" value="AQUAPORIN TRANSPORTER"/>
    <property type="match status" value="1"/>
</dbReference>
<dbReference type="PANTHER" id="PTHR19139:SF199">
    <property type="entry name" value="MIP17260P"/>
    <property type="match status" value="1"/>
</dbReference>
<dbReference type="Pfam" id="PF00230">
    <property type="entry name" value="MIP"/>
    <property type="match status" value="1"/>
</dbReference>
<dbReference type="PRINTS" id="PR00783">
    <property type="entry name" value="MINTRINSICP"/>
</dbReference>
<dbReference type="SUPFAM" id="SSF81338">
    <property type="entry name" value="Aquaporin-like"/>
    <property type="match status" value="1"/>
</dbReference>
<dbReference type="PROSITE" id="PS00221">
    <property type="entry name" value="MIP"/>
    <property type="match status" value="1"/>
</dbReference>
<keyword id="KW-0997">Cell inner membrane</keyword>
<keyword id="KW-1003">Cell membrane</keyword>
<keyword id="KW-0472">Membrane</keyword>
<keyword id="KW-1185">Reference proteome</keyword>
<keyword id="KW-0677">Repeat</keyword>
<keyword id="KW-0812">Transmembrane</keyword>
<keyword id="KW-1133">Transmembrane helix</keyword>
<keyword id="KW-0813">Transport</keyword>
<organism>
    <name type="scientific">Shigella flexneri</name>
    <dbReference type="NCBI Taxonomy" id="623"/>
    <lineage>
        <taxon>Bacteria</taxon>
        <taxon>Pseudomonadati</taxon>
        <taxon>Pseudomonadota</taxon>
        <taxon>Gammaproteobacteria</taxon>
        <taxon>Enterobacterales</taxon>
        <taxon>Enterobacteriaceae</taxon>
        <taxon>Shigella</taxon>
    </lineage>
</organism>